<evidence type="ECO:0000250" key="1">
    <source>
        <dbReference type="UniProtKB" id="A2XDA1"/>
    </source>
</evidence>
<evidence type="ECO:0000255" key="2">
    <source>
        <dbReference type="PROSITE-ProRule" id="PRU00628"/>
    </source>
</evidence>
<evidence type="ECO:0000269" key="3">
    <source>
    </source>
</evidence>
<evidence type="ECO:0000303" key="4">
    <source>
    </source>
</evidence>
<evidence type="ECO:0000305" key="5"/>
<evidence type="ECO:0000305" key="6">
    <source>
    </source>
</evidence>
<evidence type="ECO:0000312" key="7">
    <source>
        <dbReference type="EMBL" id="AAM71569.1"/>
    </source>
</evidence>
<organism>
    <name type="scientific">Chlorobaculum tepidum (strain ATCC 49652 / DSM 12025 / NBRC 103806 / TLS)</name>
    <name type="common">Chlorobium tepidum</name>
    <dbReference type="NCBI Taxonomy" id="194439"/>
    <lineage>
        <taxon>Bacteria</taxon>
        <taxon>Pseudomonadati</taxon>
        <taxon>Chlorobiota</taxon>
        <taxon>Chlorobiia</taxon>
        <taxon>Chlorobiales</taxon>
        <taxon>Chlorobiaceae</taxon>
        <taxon>Chlorobaculum</taxon>
    </lineage>
</organism>
<dbReference type="EC" id="1.3.99.39" evidence="6"/>
<dbReference type="EMBL" id="AE006470">
    <property type="protein sequence ID" value="AAM71569.1"/>
    <property type="molecule type" value="Genomic_DNA"/>
</dbReference>
<dbReference type="RefSeq" id="NP_661227.1">
    <property type="nucleotide sequence ID" value="NC_002932.3"/>
</dbReference>
<dbReference type="RefSeq" id="WP_010932015.1">
    <property type="nucleotide sequence ID" value="NC_002932.3"/>
</dbReference>
<dbReference type="STRING" id="194439.CT0323"/>
<dbReference type="EnsemblBacteria" id="AAM71569">
    <property type="protein sequence ID" value="AAM71569"/>
    <property type="gene ID" value="CT0323"/>
</dbReference>
<dbReference type="KEGG" id="cte:CT0323"/>
<dbReference type="PATRIC" id="fig|194439.7.peg.313"/>
<dbReference type="eggNOG" id="COG0723">
    <property type="taxonomic scope" value="Bacteria"/>
</dbReference>
<dbReference type="eggNOG" id="COG1232">
    <property type="taxonomic scope" value="Bacteria"/>
</dbReference>
<dbReference type="eggNOG" id="COG3349">
    <property type="taxonomic scope" value="Bacteria"/>
</dbReference>
<dbReference type="HOGENOM" id="CLU_026366_0_0_10"/>
<dbReference type="OrthoDB" id="165343at2"/>
<dbReference type="BioCyc" id="MetaCyc:MONOMER-20348"/>
<dbReference type="BRENDA" id="1.3.99.39">
    <property type="organism ID" value="1345"/>
</dbReference>
<dbReference type="Proteomes" id="UP000001007">
    <property type="component" value="Chromosome"/>
</dbReference>
<dbReference type="GO" id="GO:0051537">
    <property type="term" value="F:2 iron, 2 sulfur cluster binding"/>
    <property type="evidence" value="ECO:0007669"/>
    <property type="project" value="UniProtKB-KW"/>
</dbReference>
<dbReference type="GO" id="GO:0046872">
    <property type="term" value="F:metal ion binding"/>
    <property type="evidence" value="ECO:0007669"/>
    <property type="project" value="UniProtKB-KW"/>
</dbReference>
<dbReference type="GO" id="GO:0016491">
    <property type="term" value="F:oxidoreductase activity"/>
    <property type="evidence" value="ECO:0007669"/>
    <property type="project" value="UniProtKB-KW"/>
</dbReference>
<dbReference type="CDD" id="cd03467">
    <property type="entry name" value="Rieske"/>
    <property type="match status" value="1"/>
</dbReference>
<dbReference type="Gene3D" id="3.90.660.50">
    <property type="match status" value="1"/>
</dbReference>
<dbReference type="Gene3D" id="3.50.50.60">
    <property type="entry name" value="FAD/NAD(P)-binding domain"/>
    <property type="match status" value="2"/>
</dbReference>
<dbReference type="Gene3D" id="2.102.10.10">
    <property type="entry name" value="Rieske [2Fe-2S] iron-sulphur domain"/>
    <property type="match status" value="1"/>
</dbReference>
<dbReference type="InterPro" id="IPR002937">
    <property type="entry name" value="Amino_oxidase"/>
</dbReference>
<dbReference type="InterPro" id="IPR036188">
    <property type="entry name" value="FAD/NAD-bd_sf"/>
</dbReference>
<dbReference type="InterPro" id="IPR017941">
    <property type="entry name" value="Rieske_2Fe-2S"/>
</dbReference>
<dbReference type="InterPro" id="IPR036922">
    <property type="entry name" value="Rieske_2Fe-2S_sf"/>
</dbReference>
<dbReference type="InterPro" id="IPR050464">
    <property type="entry name" value="Zeta_carotene_desat/Oxidored"/>
</dbReference>
<dbReference type="PANTHER" id="PTHR42923:SF43">
    <property type="entry name" value="AMINE OXIDASE"/>
    <property type="match status" value="1"/>
</dbReference>
<dbReference type="PANTHER" id="PTHR42923">
    <property type="entry name" value="PROTOPORPHYRINOGEN OXIDASE"/>
    <property type="match status" value="1"/>
</dbReference>
<dbReference type="Pfam" id="PF01593">
    <property type="entry name" value="Amino_oxidase"/>
    <property type="match status" value="1"/>
</dbReference>
<dbReference type="Pfam" id="PF13450">
    <property type="entry name" value="NAD_binding_8"/>
    <property type="match status" value="1"/>
</dbReference>
<dbReference type="Pfam" id="PF00355">
    <property type="entry name" value="Rieske"/>
    <property type="match status" value="1"/>
</dbReference>
<dbReference type="SUPFAM" id="SSF51905">
    <property type="entry name" value="FAD/NAD(P)-binding domain"/>
    <property type="match status" value="1"/>
</dbReference>
<dbReference type="SUPFAM" id="SSF50022">
    <property type="entry name" value="ISP domain"/>
    <property type="match status" value="1"/>
</dbReference>
<dbReference type="PROSITE" id="PS51296">
    <property type="entry name" value="RIESKE"/>
    <property type="match status" value="1"/>
</dbReference>
<gene>
    <name evidence="4" type="primary">crtU</name>
    <name evidence="7" type="ordered locus">CT0323</name>
</gene>
<proteinExistence type="inferred from homology"/>
<protein>
    <recommendedName>
        <fullName evidence="5">Carotenoid phi-ring synthase</fullName>
        <ecNumber evidence="6">1.3.99.39</ecNumber>
    </recommendedName>
    <alternativeName>
        <fullName evidence="5">Carotenoid beta-ring:acceptor oxidoreductase/methyltranferase (phi-ring forming)</fullName>
    </alternativeName>
    <alternativeName>
        <fullName evidence="4">Gamma-carotene desaturase</fullName>
    </alternativeName>
</protein>
<accession>Q8KFK3</accession>
<reference key="1">
    <citation type="journal article" date="2002" name="Proc. Natl. Acad. Sci. U.S.A.">
        <title>The complete genome sequence of Chlorobium tepidum TLS, a photosynthetic, anaerobic, green-sulfur bacterium.</title>
        <authorList>
            <person name="Eisen J.A."/>
            <person name="Nelson K.E."/>
            <person name="Paulsen I.T."/>
            <person name="Heidelberg J.F."/>
            <person name="Wu M."/>
            <person name="Dodson R.J."/>
            <person name="DeBoy R.T."/>
            <person name="Gwinn M.L."/>
            <person name="Nelson W.C."/>
            <person name="Haft D.H."/>
            <person name="Hickey E.K."/>
            <person name="Peterson J.D."/>
            <person name="Durkin A.S."/>
            <person name="Kolonay J.F."/>
            <person name="Yang F."/>
            <person name="Holt I.E."/>
            <person name="Umayam L.A."/>
            <person name="Mason T.M."/>
            <person name="Brenner M."/>
            <person name="Shea T.P."/>
            <person name="Parksey D.S."/>
            <person name="Nierman W.C."/>
            <person name="Feldblyum T.V."/>
            <person name="Hansen C.L."/>
            <person name="Craven M.B."/>
            <person name="Radune D."/>
            <person name="Vamathevan J.J."/>
            <person name="Khouri H.M."/>
            <person name="White O."/>
            <person name="Gruber T.M."/>
            <person name="Ketchum K.A."/>
            <person name="Venter J.C."/>
            <person name="Tettelin H."/>
            <person name="Bryant D.A."/>
            <person name="Fraser C.M."/>
        </authorList>
    </citation>
    <scope>NUCLEOTIDE SEQUENCE [LARGE SCALE GENOMIC DNA]</scope>
    <source>
        <strain>ATCC 49652 / DSM 12025 / NBRC 103806 / TLS</strain>
    </source>
</reference>
<reference key="2">
    <citation type="journal article" date="2004" name="J. Bacteriol.">
        <title>Genetic manipulation of carotenoid biosynthesis in the green sulfur bacterium Chlorobium tepidum.</title>
        <authorList>
            <person name="Frigaard N.U."/>
            <person name="Maresca J.A."/>
            <person name="Yunker C.E."/>
            <person name="Jones A.D."/>
            <person name="Bryant D.A."/>
        </authorList>
    </citation>
    <scope>FUNCTION</scope>
    <scope>PATHWAY</scope>
    <scope>DISRUPTION PHENOTYPE</scope>
    <source>
        <strain>TLS / WT2321</strain>
    </source>
</reference>
<sequence>MQRREFFQHFLKRAGIGAGALGAATAGLVGYYQPRKEVFDTSGKNNDELAEKLTTPKKAVVIGGGLAGISSALELARRNFEVTLVEASPSLGGKLTGWSIEALGEQFPVEHGFHGFFDQYYNLNEMFASAGIGSDMFTASPGYPVIFSDRQVEVFGQTPKWFPFNILSVVQQSKRLDIMSFLKDYPGLWPVISMFRYQYDRTFRDWDSIDFMTYCRRGEVLPAFIDTVLHPFSDATMNRMEVLSAAEAMRYFHFYFMGSPEGLAFRIITKDCMSALIEPLERKMTSLGVRVLKGRKAQNLVMQDGRVTAVRLDGAGAANGEVASIPKREVPVTGWLQHMSDAGIPVLVARRGASWVALDGRCTHMGCPVAPEVSTGGFHCPCHDGRFNAEGLPVSGPPKAPLPRLDVREAGEMLVIGQASSSSSPVVVTAEELPCDYCVVASGVRGTRELIALTRPGNSGFAGQVAALGEADPYVVWRVWLDRPLPSADFPFYTVSGYTYTDSITFYSSFQQPFIDWAKRTGGCVVELHAYAVAPQDVRPEPEIRATMLQELHAMFPESKNATIRHEIFMMQSNFTRWAPGDHAKRPGVETPYANLFLAGDWVSTKAPVFLMEAAVFTGRMAANAISAKESLRQKPLPIVPMNGIFA</sequence>
<name>CRTU_CHLTE</name>
<keyword id="KW-0001">2Fe-2S</keyword>
<keyword id="KW-0274">FAD</keyword>
<keyword id="KW-0285">Flavoprotein</keyword>
<keyword id="KW-0408">Iron</keyword>
<keyword id="KW-0411">Iron-sulfur</keyword>
<keyword id="KW-0479">Metal-binding</keyword>
<keyword id="KW-0560">Oxidoreductase</keyword>
<keyword id="KW-1185">Reference proteome</keyword>
<comment type="function">
    <text evidence="3 6">Involved in the biosynthesis of chlorobactene, a carotenoid with aromatic end group (PubMed:15292122). Catalyzes the introduction of two additional double bonds into the ionone ring of gamma-carotene to produce chlorobactene. The reaction includes an intramolecular methyl transfer from position C1 to position C2 of the ring (Probable).</text>
</comment>
<comment type="catalytic activity">
    <reaction evidence="6">
        <text>a carotenoid beta-end derivative + 2 A = a carotenoid phi-end derivative + 2 AH2</text>
        <dbReference type="Rhea" id="RHEA:22524"/>
        <dbReference type="ChEBI" id="CHEBI:13193"/>
        <dbReference type="ChEBI" id="CHEBI:17499"/>
        <dbReference type="ChEBI" id="CHEBI:139120"/>
        <dbReference type="ChEBI" id="CHEBI:139129"/>
        <dbReference type="EC" id="1.3.99.39"/>
    </reaction>
</comment>
<comment type="cofactor">
    <cofactor evidence="1">
        <name>FAD</name>
        <dbReference type="ChEBI" id="CHEBI:57692"/>
    </cofactor>
</comment>
<comment type="cofactor">
    <cofactor evidence="2">
        <name>[2Fe-2S] cluster</name>
        <dbReference type="ChEBI" id="CHEBI:190135"/>
    </cofactor>
    <text evidence="2">Binds 1 [2Fe-2S] cluster per subunit.</text>
</comment>
<comment type="pathway">
    <text evidence="3">Carotenoid biosynthesis.</text>
</comment>
<comment type="disruption phenotype">
    <text evidence="3">Mutant lacks chlorobactene and all its derivatives, and accumulates only gamma-carotene and its derivatives. The growth rate of the mutant shows no significant deviation from the wild-type growth rate at any light intensity.</text>
</comment>
<comment type="similarity">
    <text evidence="5">Belongs to the carotenoid/retinoid oxidoreductase family.</text>
</comment>
<feature type="chain" id="PRO_0000453388" description="Carotenoid phi-ring synthase">
    <location>
        <begin position="1"/>
        <end position="647"/>
    </location>
</feature>
<feature type="domain" description="Rieske" evidence="2">
    <location>
        <begin position="322"/>
        <end position="416"/>
    </location>
</feature>
<feature type="binding site" evidence="1">
    <location>
        <position position="67"/>
    </location>
    <ligand>
        <name>FAD</name>
        <dbReference type="ChEBI" id="CHEBI:57692"/>
    </ligand>
</feature>
<feature type="binding site" evidence="1">
    <location>
        <begin position="86"/>
        <end position="87"/>
    </location>
    <ligand>
        <name>FAD</name>
        <dbReference type="ChEBI" id="CHEBI:57692"/>
    </ligand>
</feature>
<feature type="binding site" evidence="1">
    <location>
        <position position="94"/>
    </location>
    <ligand>
        <name>FAD</name>
        <dbReference type="ChEBI" id="CHEBI:57692"/>
    </ligand>
</feature>
<feature type="binding site" evidence="1">
    <location>
        <position position="120"/>
    </location>
    <ligand>
        <name>FAD</name>
        <dbReference type="ChEBI" id="CHEBI:57692"/>
    </ligand>
</feature>
<feature type="binding site" evidence="2">
    <location>
        <position position="362"/>
    </location>
    <ligand>
        <name>[2Fe-2S] cluster</name>
        <dbReference type="ChEBI" id="CHEBI:190135"/>
    </ligand>
</feature>
<feature type="binding site" evidence="2">
    <location>
        <position position="364"/>
    </location>
    <ligand>
        <name>[2Fe-2S] cluster</name>
        <dbReference type="ChEBI" id="CHEBI:190135"/>
    </ligand>
</feature>
<feature type="binding site" evidence="2">
    <location>
        <position position="380"/>
    </location>
    <ligand>
        <name>[2Fe-2S] cluster</name>
        <dbReference type="ChEBI" id="CHEBI:190135"/>
    </ligand>
</feature>
<feature type="binding site" evidence="2">
    <location>
        <position position="383"/>
    </location>
    <ligand>
        <name>[2Fe-2S] cluster</name>
        <dbReference type="ChEBI" id="CHEBI:190135"/>
    </ligand>
</feature>
<feature type="binding site" evidence="1">
    <location>
        <position position="601"/>
    </location>
    <ligand>
        <name>FAD</name>
        <dbReference type="ChEBI" id="CHEBI:57692"/>
    </ligand>
</feature>
<feature type="binding site" evidence="1">
    <location>
        <position position="612"/>
    </location>
    <ligand>
        <name>FAD</name>
        <dbReference type="ChEBI" id="CHEBI:57692"/>
    </ligand>
</feature>